<name>GGGPS_SACI4</name>
<gene>
    <name type="ordered locus">M1425_1879</name>
</gene>
<feature type="chain" id="PRO_1000202944" description="Geranylgeranylglyceryl phosphate synthase">
    <location>
        <begin position="1"/>
        <end position="255"/>
    </location>
</feature>
<feature type="binding site" evidence="1">
    <location>
        <position position="34"/>
    </location>
    <ligand>
        <name>Mg(2+)</name>
        <dbReference type="ChEBI" id="CHEBI:18420"/>
    </ligand>
</feature>
<feature type="binding site" evidence="1">
    <location>
        <position position="64"/>
    </location>
    <ligand>
        <name>Mg(2+)</name>
        <dbReference type="ChEBI" id="CHEBI:18420"/>
    </ligand>
</feature>
<feature type="binding site" evidence="1">
    <location>
        <begin position="182"/>
        <end position="188"/>
    </location>
    <ligand>
        <name>sn-glycerol 1-phosphate</name>
        <dbReference type="ChEBI" id="CHEBI:57685"/>
    </ligand>
</feature>
<feature type="binding site" evidence="1">
    <location>
        <begin position="213"/>
        <end position="214"/>
    </location>
    <ligand>
        <name>sn-glycerol 1-phosphate</name>
        <dbReference type="ChEBI" id="CHEBI:57685"/>
    </ligand>
</feature>
<feature type="binding site" evidence="1">
    <location>
        <begin position="235"/>
        <end position="236"/>
    </location>
    <ligand>
        <name>sn-glycerol 1-phosphate</name>
        <dbReference type="ChEBI" id="CHEBI:57685"/>
    </ligand>
</feature>
<accession>C3MY66</accession>
<protein>
    <recommendedName>
        <fullName evidence="1">Geranylgeranylglyceryl phosphate synthase</fullName>
        <shortName evidence="1">GGGP synthase</shortName>
        <shortName evidence="1">GGGPS</shortName>
        <ecNumber evidence="1">2.5.1.41</ecNumber>
    </recommendedName>
    <alternativeName>
        <fullName evidence="1">(S)-3-O-geranylgeranylglyceryl phosphate synthase</fullName>
    </alternativeName>
    <alternativeName>
        <fullName evidence="1">Phosphoglycerol geranylgeranyltransferase</fullName>
    </alternativeName>
</protein>
<dbReference type="EC" id="2.5.1.41" evidence="1"/>
<dbReference type="EMBL" id="CP001400">
    <property type="protein sequence ID" value="ACP38623.1"/>
    <property type="molecule type" value="Genomic_DNA"/>
</dbReference>
<dbReference type="RefSeq" id="WP_012711853.1">
    <property type="nucleotide sequence ID" value="NC_012588.1"/>
</dbReference>
<dbReference type="SMR" id="C3MY66"/>
<dbReference type="KEGG" id="sia:M1425_1879"/>
<dbReference type="HOGENOM" id="CLU_068610_0_0_2"/>
<dbReference type="UniPathway" id="UPA00940"/>
<dbReference type="Proteomes" id="UP000001350">
    <property type="component" value="Chromosome"/>
</dbReference>
<dbReference type="GO" id="GO:0005737">
    <property type="term" value="C:cytoplasm"/>
    <property type="evidence" value="ECO:0007669"/>
    <property type="project" value="UniProtKB-SubCell"/>
</dbReference>
<dbReference type="GO" id="GO:0000287">
    <property type="term" value="F:magnesium ion binding"/>
    <property type="evidence" value="ECO:0007669"/>
    <property type="project" value="UniProtKB-UniRule"/>
</dbReference>
<dbReference type="GO" id="GO:0047294">
    <property type="term" value="F:phosphoglycerol geranylgeranyltransferase activity"/>
    <property type="evidence" value="ECO:0007669"/>
    <property type="project" value="UniProtKB-UniRule"/>
</dbReference>
<dbReference type="GO" id="GO:0046474">
    <property type="term" value="P:glycerophospholipid biosynthetic process"/>
    <property type="evidence" value="ECO:0007669"/>
    <property type="project" value="UniProtKB-UniRule"/>
</dbReference>
<dbReference type="CDD" id="cd02812">
    <property type="entry name" value="PcrB_like"/>
    <property type="match status" value="1"/>
</dbReference>
<dbReference type="FunFam" id="3.20.20.390:FF:000001">
    <property type="entry name" value="Heptaprenylglyceryl phosphate synthase"/>
    <property type="match status" value="1"/>
</dbReference>
<dbReference type="Gene3D" id="3.20.20.390">
    <property type="entry name" value="FMN-linked oxidoreductases"/>
    <property type="match status" value="1"/>
</dbReference>
<dbReference type="HAMAP" id="MF_00112">
    <property type="entry name" value="GGGP_HepGP_synthase"/>
    <property type="match status" value="1"/>
</dbReference>
<dbReference type="InterPro" id="IPR039074">
    <property type="entry name" value="GGGP/HepGP_synthase_I"/>
</dbReference>
<dbReference type="InterPro" id="IPR038597">
    <property type="entry name" value="GGGP/HepGP_synthase_sf"/>
</dbReference>
<dbReference type="InterPro" id="IPR008205">
    <property type="entry name" value="GGGP_HepGP_synthase"/>
</dbReference>
<dbReference type="InterPro" id="IPR010946">
    <property type="entry name" value="GGGP_synth"/>
</dbReference>
<dbReference type="NCBIfam" id="TIGR01769">
    <property type="entry name" value="GGGP"/>
    <property type="match status" value="1"/>
</dbReference>
<dbReference type="NCBIfam" id="TIGR01768">
    <property type="entry name" value="GGGP-family"/>
    <property type="match status" value="1"/>
</dbReference>
<dbReference type="NCBIfam" id="NF003198">
    <property type="entry name" value="PRK04169.1-2"/>
    <property type="match status" value="1"/>
</dbReference>
<dbReference type="NCBIfam" id="NF003202">
    <property type="entry name" value="PRK04169.1-6"/>
    <property type="match status" value="1"/>
</dbReference>
<dbReference type="PANTHER" id="PTHR40029">
    <property type="match status" value="1"/>
</dbReference>
<dbReference type="PANTHER" id="PTHR40029:SF2">
    <property type="entry name" value="HEPTAPRENYLGLYCERYL PHOSPHATE SYNTHASE"/>
    <property type="match status" value="1"/>
</dbReference>
<dbReference type="Pfam" id="PF01884">
    <property type="entry name" value="PcrB"/>
    <property type="match status" value="1"/>
</dbReference>
<dbReference type="SUPFAM" id="SSF51395">
    <property type="entry name" value="FMN-linked oxidoreductases"/>
    <property type="match status" value="1"/>
</dbReference>
<reference key="1">
    <citation type="journal article" date="2009" name="Proc. Natl. Acad. Sci. U.S.A.">
        <title>Biogeography of the Sulfolobus islandicus pan-genome.</title>
        <authorList>
            <person name="Reno M.L."/>
            <person name="Held N.L."/>
            <person name="Fields C.J."/>
            <person name="Burke P.V."/>
            <person name="Whitaker R.J."/>
        </authorList>
    </citation>
    <scope>NUCLEOTIDE SEQUENCE [LARGE SCALE GENOMIC DNA]</scope>
    <source>
        <strain>M.14.25 / Kamchatka #1</strain>
    </source>
</reference>
<proteinExistence type="inferred from homology"/>
<organism>
    <name type="scientific">Saccharolobus islandicus (strain M.14.25 / Kamchatka #1)</name>
    <name type="common">Sulfolobus islandicus</name>
    <dbReference type="NCBI Taxonomy" id="427317"/>
    <lineage>
        <taxon>Archaea</taxon>
        <taxon>Thermoproteota</taxon>
        <taxon>Thermoprotei</taxon>
        <taxon>Sulfolobales</taxon>
        <taxon>Sulfolobaceae</taxon>
        <taxon>Saccharolobus</taxon>
    </lineage>
</organism>
<keyword id="KW-0963">Cytoplasm</keyword>
<keyword id="KW-0444">Lipid biosynthesis</keyword>
<keyword id="KW-0443">Lipid metabolism</keyword>
<keyword id="KW-0460">Magnesium</keyword>
<keyword id="KW-0479">Metal-binding</keyword>
<keyword id="KW-0594">Phospholipid biosynthesis</keyword>
<keyword id="KW-1208">Phospholipid metabolism</keyword>
<keyword id="KW-0808">Transferase</keyword>
<evidence type="ECO:0000255" key="1">
    <source>
        <dbReference type="HAMAP-Rule" id="MF_00112"/>
    </source>
</evidence>
<comment type="function">
    <text evidence="1">Prenyltransferase that catalyzes the transfer of the geranylgeranyl moiety of geranylgeranyl diphosphate (GGPP) to the C3 hydroxyl of sn-glycerol-1-phosphate (G1P). This reaction is the first ether-bond-formation step in the biosynthesis of archaeal membrane lipids.</text>
</comment>
<comment type="catalytic activity">
    <reaction evidence="1">
        <text>sn-glycerol 1-phosphate + (2E,6E,10E)-geranylgeranyl diphosphate = sn-3-O-(geranylgeranyl)glycerol 1-phosphate + diphosphate</text>
        <dbReference type="Rhea" id="RHEA:23404"/>
        <dbReference type="ChEBI" id="CHEBI:33019"/>
        <dbReference type="ChEBI" id="CHEBI:57677"/>
        <dbReference type="ChEBI" id="CHEBI:57685"/>
        <dbReference type="ChEBI" id="CHEBI:58756"/>
        <dbReference type="EC" id="2.5.1.41"/>
    </reaction>
</comment>
<comment type="cofactor">
    <cofactor evidence="1">
        <name>Mg(2+)</name>
        <dbReference type="ChEBI" id="CHEBI:18420"/>
    </cofactor>
</comment>
<comment type="pathway">
    <text evidence="1">Membrane lipid metabolism; glycerophospholipid metabolism.</text>
</comment>
<comment type="subcellular location">
    <subcellularLocation>
        <location evidence="1">Cytoplasm</location>
    </subcellularLocation>
</comment>
<comment type="similarity">
    <text evidence="1">Belongs to the GGGP/HepGP synthase family. Group II subfamily.</text>
</comment>
<sequence length="255" mass="28041">MKIRKKKMKLKGKVKKYLMDKLNDNEKLHFSLLDPFKINSSEELKYIAKNLYNVGTDAFLIGGTLGVSKDKLDFVISLLDDYEIPKIIFPSNINLLSEKADALLFLSLLNSDDIYYVIGAQIVAAPIIKMLQIEVIPTAYVIVGHGGTAAHIGKARVIPYDNFELATAYTLAAEYLGMDFVYLEAGSGAPEPIRPEMISFIKKASSIPLIIGGGIRSVEVALKLVEAGANIIVTGNIIERDVDKAIKIIRGIKNK</sequence>